<evidence type="ECO:0000250" key="1"/>
<evidence type="ECO:0000255" key="2"/>
<evidence type="ECO:0000305" key="3"/>
<accession>O54759</accession>
<dbReference type="EMBL" id="AB000548">
    <property type="protein sequence ID" value="BAA24418.1"/>
    <property type="molecule type" value="mRNA"/>
</dbReference>
<dbReference type="SMR" id="O54759"/>
<dbReference type="MEROPS" id="I04.001"/>
<dbReference type="GO" id="GO:0005615">
    <property type="term" value="C:extracellular space"/>
    <property type="evidence" value="ECO:0007669"/>
    <property type="project" value="InterPro"/>
</dbReference>
<dbReference type="GO" id="GO:0004867">
    <property type="term" value="F:serine-type endopeptidase inhibitor activity"/>
    <property type="evidence" value="ECO:0007669"/>
    <property type="project" value="UniProtKB-KW"/>
</dbReference>
<dbReference type="CDD" id="cd02056">
    <property type="entry name" value="serpinA1_A1AT"/>
    <property type="match status" value="1"/>
</dbReference>
<dbReference type="FunFam" id="2.30.39.10:FF:000003">
    <property type="entry name" value="alpha-1-antitrypsin isoform X1"/>
    <property type="match status" value="1"/>
</dbReference>
<dbReference type="FunFam" id="3.30.497.10:FF:000001">
    <property type="entry name" value="Serine protease inhibitor"/>
    <property type="match status" value="1"/>
</dbReference>
<dbReference type="FunFam" id="2.10.310.10:FF:000001">
    <property type="entry name" value="Serpin family A member 1"/>
    <property type="match status" value="1"/>
</dbReference>
<dbReference type="Gene3D" id="2.30.39.10">
    <property type="entry name" value="Alpha-1-antitrypsin, domain 1"/>
    <property type="match status" value="1"/>
</dbReference>
<dbReference type="Gene3D" id="3.30.497.10">
    <property type="entry name" value="Antithrombin, subunit I, domain 2"/>
    <property type="match status" value="1"/>
</dbReference>
<dbReference type="Gene3D" id="2.10.310.10">
    <property type="entry name" value="Serpins superfamily"/>
    <property type="match status" value="1"/>
</dbReference>
<dbReference type="InterPro" id="IPR023795">
    <property type="entry name" value="Serpin_CS"/>
</dbReference>
<dbReference type="InterPro" id="IPR023796">
    <property type="entry name" value="Serpin_dom"/>
</dbReference>
<dbReference type="InterPro" id="IPR000215">
    <property type="entry name" value="Serpin_fam"/>
</dbReference>
<dbReference type="InterPro" id="IPR036186">
    <property type="entry name" value="Serpin_sf"/>
</dbReference>
<dbReference type="InterPro" id="IPR042178">
    <property type="entry name" value="Serpin_sf_1"/>
</dbReference>
<dbReference type="InterPro" id="IPR042185">
    <property type="entry name" value="Serpin_sf_2"/>
</dbReference>
<dbReference type="PANTHER" id="PTHR11461:SF165">
    <property type="entry name" value="ALPHA-1-ANTITRYPSIN"/>
    <property type="match status" value="1"/>
</dbReference>
<dbReference type="PANTHER" id="PTHR11461">
    <property type="entry name" value="SERINE PROTEASE INHIBITOR, SERPIN"/>
    <property type="match status" value="1"/>
</dbReference>
<dbReference type="Pfam" id="PF00079">
    <property type="entry name" value="Serpin"/>
    <property type="match status" value="1"/>
</dbReference>
<dbReference type="SMART" id="SM00093">
    <property type="entry name" value="SERPIN"/>
    <property type="match status" value="1"/>
</dbReference>
<dbReference type="SUPFAM" id="SSF56574">
    <property type="entry name" value="Serpins"/>
    <property type="match status" value="1"/>
</dbReference>
<dbReference type="PROSITE" id="PS00284">
    <property type="entry name" value="SERPIN"/>
    <property type="match status" value="1"/>
</dbReference>
<feature type="signal peptide" evidence="2">
    <location>
        <begin position="1"/>
        <end position="24"/>
    </location>
</feature>
<feature type="chain" id="PRO_0000032405" description="Alpha-1-antitrypsin-like protein CM55-ST">
    <location>
        <begin position="25"/>
        <end position="413"/>
    </location>
</feature>
<feature type="region of interest" description="RCL">
    <location>
        <begin position="368"/>
        <end position="387"/>
    </location>
</feature>
<feature type="site" description="Reactive bond" evidence="1">
    <location>
        <begin position="377"/>
        <end position="378"/>
    </location>
</feature>
<feature type="modified residue" description="Pyrrolidone carboxylic acid" evidence="2">
    <location>
        <position position="25"/>
    </location>
</feature>
<feature type="glycosylation site" description="N-linked (GlcNAc...) asparagine" evidence="2">
    <location>
        <position position="65"/>
    </location>
</feature>
<feature type="glycosylation site" description="N-linked (GlcNAc...) asparagine" evidence="2">
    <location>
        <position position="102"/>
    </location>
</feature>
<feature type="glycosylation site" description="N-linked (GlcNAc...) asparagine" evidence="2">
    <location>
        <position position="165"/>
    </location>
</feature>
<feature type="glycosylation site" description="N-linked (GlcNAc...) asparagine" evidence="2">
    <location>
        <position position="266"/>
    </location>
</feature>
<sequence>MPSSISWGLLLLAALSCLGPGSLAQDAQETEASKQDQEHPASHRIAPHLAEFALSFYRVLARQSNTTNIFFSPVSIATALAMLSLGTKGDTHTQILEGLDFNLTEMAEADIHQGFQNLLQTLNRPNTQLQLTSGNGLFIDRNLKLLDKFLEDVKSLYHSEAFSTNFTNTQEARQQINSYVEKGTQGKIVELLKELDRDTVLALVNYIFFKGKWKQPFNEEQTREKDFHVDEATTVRVPMMNRLGMFHLHHCSTLASWVLQMDYLGNATAIFLLPDKGKMQHLEDTVTTEILTKFLKNRQTTKSQLYFPKVSISGTYDLKDVLSSLGITKVFSSEADLSGVTEEAPLSVSKALHKAVLDIDEEGTEAAGGTVLGNIRSTLRYEVIFDRPFLVVIYEHHTKSPLFVGKVVNPTQQ</sequence>
<keyword id="KW-0325">Glycoprotein</keyword>
<keyword id="KW-0646">Protease inhibitor</keyword>
<keyword id="KW-0873">Pyrrolidone carboxylic acid</keyword>
<keyword id="KW-0722">Serine protease inhibitor</keyword>
<keyword id="KW-0732">Signal</keyword>
<protein>
    <recommendedName>
        <fullName>Alpha-1-antitrypsin-like protein CM55-ST</fullName>
    </recommendedName>
</protein>
<reference key="1">
    <citation type="journal article" date="1997" name="Gene">
        <title>Expression of multiple alpha1-antitrypsin-like genes in hibernating species of the squirrel family.</title>
        <authorList>
            <person name="Takamatsu N."/>
            <person name="Kojima M."/>
            <person name="Taniyama M."/>
            <person name="Ohba K."/>
            <person name="Uematsu T."/>
            <person name="Segawa C."/>
            <person name="Tsutou S."/>
            <person name="Watanabe M."/>
            <person name="Kondo J."/>
            <person name="Kondo N."/>
            <person name="Shiba T."/>
        </authorList>
    </citation>
    <scope>NUCLEOTIDE SEQUENCE [MRNA]</scope>
    <source>
        <tissue>Liver</tissue>
    </source>
</reference>
<name>ALST_TAMSI</name>
<organism>
    <name type="scientific">Tamias sibiricus</name>
    <name type="common">Siberian chipmunk</name>
    <name type="synonym">Eutamias sibiricus</name>
    <dbReference type="NCBI Taxonomy" id="64680"/>
    <lineage>
        <taxon>Eukaryota</taxon>
        <taxon>Metazoa</taxon>
        <taxon>Chordata</taxon>
        <taxon>Craniata</taxon>
        <taxon>Vertebrata</taxon>
        <taxon>Euteleostomi</taxon>
        <taxon>Mammalia</taxon>
        <taxon>Eutheria</taxon>
        <taxon>Euarchontoglires</taxon>
        <taxon>Glires</taxon>
        <taxon>Rodentia</taxon>
        <taxon>Sciuromorpha</taxon>
        <taxon>Sciuridae</taxon>
        <taxon>Xerinae</taxon>
        <taxon>Marmotini</taxon>
        <taxon>Tamias</taxon>
    </lineage>
</organism>
<comment type="tissue specificity">
    <text>Expressed in liver.</text>
</comment>
<comment type="domain">
    <text evidence="1">The reactive center loop (RCL) extends out from the body of the protein and directs binding to the target protease. The protease cleaves the serpin at the reactive site within the RCL, establishing a covalent linkage between the serpin reactive site and the active site of the protease. The resulting inactive serpin-protease complex is highly stable (By similarity).</text>
</comment>
<comment type="similarity">
    <text evidence="3">Belongs to the serpin family.</text>
</comment>
<proteinExistence type="evidence at transcript level"/>